<accession>Q9WZP4</accession>
<name>THI4_THEMA</name>
<organism>
    <name type="scientific">Thermotoga maritima (strain ATCC 43589 / DSM 3109 / JCM 10099 / NBRC 100826 / MSB8)</name>
    <dbReference type="NCBI Taxonomy" id="243274"/>
    <lineage>
        <taxon>Bacteria</taxon>
        <taxon>Thermotogati</taxon>
        <taxon>Thermotogota</taxon>
        <taxon>Thermotogae</taxon>
        <taxon>Thermotogales</taxon>
        <taxon>Thermotogaceae</taxon>
        <taxon>Thermotoga</taxon>
    </lineage>
</organism>
<feature type="chain" id="PRO_0000153955" description="Thiamine thiazole synthase">
    <location>
        <begin position="1"/>
        <end position="250"/>
    </location>
</feature>
<feature type="binding site" description="in other chain" evidence="1">
    <location>
        <position position="36"/>
    </location>
    <ligand>
        <name>NAD(+)</name>
        <dbReference type="ChEBI" id="CHEBI:57540"/>
        <note>ligand shared between two adjacent protomers</note>
    </ligand>
</feature>
<feature type="binding site" description="in other chain" evidence="1">
    <location>
        <begin position="55"/>
        <end position="56"/>
    </location>
    <ligand>
        <name>NAD(+)</name>
        <dbReference type="ChEBI" id="CHEBI:57540"/>
        <note>ligand shared between two adjacent protomers</note>
    </ligand>
</feature>
<feature type="binding site" description="in other chain" evidence="1">
    <location>
        <position position="63"/>
    </location>
    <ligand>
        <name>NAD(+)</name>
        <dbReference type="ChEBI" id="CHEBI:57540"/>
        <note>ligand shared between two adjacent protomers</note>
    </ligand>
</feature>
<feature type="binding site" description="in other chain" evidence="1">
    <location>
        <position position="126"/>
    </location>
    <ligand>
        <name>NAD(+)</name>
        <dbReference type="ChEBI" id="CHEBI:57540"/>
        <note>ligand shared between two adjacent protomers</note>
    </ligand>
</feature>
<feature type="binding site" evidence="1">
    <location>
        <begin position="152"/>
        <end position="154"/>
    </location>
    <ligand>
        <name>NAD(+)</name>
        <dbReference type="ChEBI" id="CHEBI:57540"/>
        <note>ligand shared between two adjacent protomers</note>
    </ligand>
</feature>
<feature type="binding site" evidence="1">
    <location>
        <position position="154"/>
    </location>
    <ligand>
        <name>Fe cation</name>
        <dbReference type="ChEBI" id="CHEBI:24875"/>
        <note>ligand shared between two adjacent protomers</note>
    </ligand>
</feature>
<feature type="binding site" description="in other chain" evidence="1">
    <location>
        <position position="169"/>
    </location>
    <ligand>
        <name>Fe cation</name>
        <dbReference type="ChEBI" id="CHEBI:24875"/>
        <note>ligand shared between two adjacent protomers</note>
    </ligand>
</feature>
<feature type="binding site" description="in other chain" evidence="1">
    <location>
        <position position="216"/>
    </location>
    <ligand>
        <name>NAD(+)</name>
        <dbReference type="ChEBI" id="CHEBI:57540"/>
        <note>ligand shared between two adjacent protomers</note>
    </ligand>
</feature>
<feature type="binding site" evidence="1">
    <location>
        <position position="226"/>
    </location>
    <ligand>
        <name>glycine</name>
        <dbReference type="ChEBI" id="CHEBI:57305"/>
    </ligand>
</feature>
<dbReference type="EC" id="2.4.2.59" evidence="1"/>
<dbReference type="EMBL" id="AE000512">
    <property type="protein sequence ID" value="AAD35869.1"/>
    <property type="molecule type" value="Genomic_DNA"/>
</dbReference>
<dbReference type="PIR" id="D72333">
    <property type="entry name" value="D72333"/>
</dbReference>
<dbReference type="RefSeq" id="NP_228596.1">
    <property type="nucleotide sequence ID" value="NC_000853.1"/>
</dbReference>
<dbReference type="SMR" id="Q9WZP4"/>
<dbReference type="STRING" id="243274.TM_0787"/>
<dbReference type="PaxDb" id="243274-THEMA_00715"/>
<dbReference type="DNASU" id="898455"/>
<dbReference type="EnsemblBacteria" id="AAD35869">
    <property type="protein sequence ID" value="AAD35869"/>
    <property type="gene ID" value="TM_0787"/>
</dbReference>
<dbReference type="KEGG" id="tma:TM0787"/>
<dbReference type="PATRIC" id="fig|243274.5.peg.799"/>
<dbReference type="eggNOG" id="COG1635">
    <property type="taxonomic scope" value="Bacteria"/>
</dbReference>
<dbReference type="InParanoid" id="Q9WZP4"/>
<dbReference type="OrthoDB" id="9806565at2"/>
<dbReference type="UniPathway" id="UPA00060"/>
<dbReference type="Proteomes" id="UP000008183">
    <property type="component" value="Chromosome"/>
</dbReference>
<dbReference type="GO" id="GO:0005506">
    <property type="term" value="F:iron ion binding"/>
    <property type="evidence" value="ECO:0000318"/>
    <property type="project" value="GO_Central"/>
</dbReference>
<dbReference type="GO" id="GO:0016763">
    <property type="term" value="F:pentosyltransferase activity"/>
    <property type="evidence" value="ECO:0007669"/>
    <property type="project" value="UniProtKB-UniRule"/>
</dbReference>
<dbReference type="GO" id="GO:0009228">
    <property type="term" value="P:thiamine biosynthetic process"/>
    <property type="evidence" value="ECO:0007669"/>
    <property type="project" value="UniProtKB-KW"/>
</dbReference>
<dbReference type="GO" id="GO:0009229">
    <property type="term" value="P:thiamine diphosphate biosynthetic process"/>
    <property type="evidence" value="ECO:0007669"/>
    <property type="project" value="UniProtKB-UniRule"/>
</dbReference>
<dbReference type="GO" id="GO:0052837">
    <property type="term" value="P:thiazole biosynthetic process"/>
    <property type="evidence" value="ECO:0000318"/>
    <property type="project" value="GO_Central"/>
</dbReference>
<dbReference type="Gene3D" id="3.50.50.60">
    <property type="entry name" value="FAD/NAD(P)-binding domain"/>
    <property type="match status" value="1"/>
</dbReference>
<dbReference type="HAMAP" id="MF_00304">
    <property type="entry name" value="Thi4"/>
    <property type="match status" value="1"/>
</dbReference>
<dbReference type="InterPro" id="IPR036188">
    <property type="entry name" value="FAD/NAD-bd_sf"/>
</dbReference>
<dbReference type="InterPro" id="IPR002922">
    <property type="entry name" value="Thi4_fam"/>
</dbReference>
<dbReference type="InterPro" id="IPR022828">
    <property type="entry name" value="Thi4_prok"/>
</dbReference>
<dbReference type="NCBIfam" id="TIGR00292">
    <property type="entry name" value="sulfide-dependent adenosine diphosphate thiazole synthase"/>
    <property type="match status" value="1"/>
</dbReference>
<dbReference type="PANTHER" id="PTHR43422">
    <property type="entry name" value="THIAMINE THIAZOLE SYNTHASE"/>
    <property type="match status" value="1"/>
</dbReference>
<dbReference type="PANTHER" id="PTHR43422:SF3">
    <property type="entry name" value="THIAMINE THIAZOLE SYNTHASE"/>
    <property type="match status" value="1"/>
</dbReference>
<dbReference type="Pfam" id="PF01946">
    <property type="entry name" value="Thi4"/>
    <property type="match status" value="1"/>
</dbReference>
<dbReference type="PRINTS" id="PR00419">
    <property type="entry name" value="ADXRDTASE"/>
</dbReference>
<dbReference type="SUPFAM" id="SSF51905">
    <property type="entry name" value="FAD/NAD(P)-binding domain"/>
    <property type="match status" value="1"/>
</dbReference>
<comment type="function">
    <text evidence="1">Involved in the biosynthesis of the thiazole moiety of thiamine. Catalyzes the conversion of NAD and glycine to adenosine diphosphate 5-(2-hydroxyethyl)-4-methylthiazole-2-carboxylate (ADT), an adenylated thiazole intermediate, using free sulfide as a source of sulfur.</text>
</comment>
<comment type="catalytic activity">
    <reaction evidence="1">
        <text>hydrogen sulfide + glycine + NAD(+) = ADP-5-ethyl-4-methylthiazole-2-carboxylate + nicotinamide + 3 H2O + H(+)</text>
        <dbReference type="Rhea" id="RHEA:55704"/>
        <dbReference type="ChEBI" id="CHEBI:15377"/>
        <dbReference type="ChEBI" id="CHEBI:15378"/>
        <dbReference type="ChEBI" id="CHEBI:17154"/>
        <dbReference type="ChEBI" id="CHEBI:29919"/>
        <dbReference type="ChEBI" id="CHEBI:57305"/>
        <dbReference type="ChEBI" id="CHEBI:57540"/>
        <dbReference type="ChEBI" id="CHEBI:139151"/>
        <dbReference type="EC" id="2.4.2.59"/>
    </reaction>
</comment>
<comment type="cofactor">
    <cofactor evidence="1">
        <name>Fe(2+)</name>
        <dbReference type="ChEBI" id="CHEBI:29033"/>
    </cofactor>
</comment>
<comment type="pathway">
    <text evidence="1">Cofactor biosynthesis; thiamine diphosphate biosynthesis.</text>
</comment>
<comment type="subunit">
    <text evidence="1">Homooctamer; tetramer of dimers.</text>
</comment>
<comment type="similarity">
    <text evidence="1">Belongs to the THI4 family.</text>
</comment>
<keyword id="KW-0408">Iron</keyword>
<keyword id="KW-0479">Metal-binding</keyword>
<keyword id="KW-0520">NAD</keyword>
<keyword id="KW-1185">Reference proteome</keyword>
<keyword id="KW-0784">Thiamine biosynthesis</keyword>
<keyword id="KW-0808">Transferase</keyword>
<proteinExistence type="inferred from homology"/>
<sequence length="250" mass="27073">MSMRDVLISRLIVERYFEKLRNSLELDVAIVGAGPSGLTAAYELAKNGFRVAVFEERNTPGGGIWGGGMMFNEIVLEKELENFLKEVEIEYEVKEDHIVVDSVHFASGLLYRATKAGAIVFNNVSVEDVAVQNGRVCGVVVNWGPTVRLGLHVDPITVKASFVVDGTGHPANVVSLLAKRGLVEMKTEFPMDADEAEKFVVDNTGEIFPGLLVSGMAVCAVHGGPRMGPIFGGMILSGQKVARIVSERLR</sequence>
<evidence type="ECO:0000255" key="1">
    <source>
        <dbReference type="HAMAP-Rule" id="MF_00304"/>
    </source>
</evidence>
<protein>
    <recommendedName>
        <fullName evidence="1">Thiamine thiazole synthase</fullName>
        <ecNumber evidence="1">2.4.2.59</ecNumber>
    </recommendedName>
</protein>
<reference key="1">
    <citation type="journal article" date="1999" name="Nature">
        <title>Evidence for lateral gene transfer between Archaea and Bacteria from genome sequence of Thermotoga maritima.</title>
        <authorList>
            <person name="Nelson K.E."/>
            <person name="Clayton R.A."/>
            <person name="Gill S.R."/>
            <person name="Gwinn M.L."/>
            <person name="Dodson R.J."/>
            <person name="Haft D.H."/>
            <person name="Hickey E.K."/>
            <person name="Peterson J.D."/>
            <person name="Nelson W.C."/>
            <person name="Ketchum K.A."/>
            <person name="McDonald L.A."/>
            <person name="Utterback T.R."/>
            <person name="Malek J.A."/>
            <person name="Linher K.D."/>
            <person name="Garrett M.M."/>
            <person name="Stewart A.M."/>
            <person name="Cotton M.D."/>
            <person name="Pratt M.S."/>
            <person name="Phillips C.A."/>
            <person name="Richardson D.L."/>
            <person name="Heidelberg J.F."/>
            <person name="Sutton G.G."/>
            <person name="Fleischmann R.D."/>
            <person name="Eisen J.A."/>
            <person name="White O."/>
            <person name="Salzberg S.L."/>
            <person name="Smith H.O."/>
            <person name="Venter J.C."/>
            <person name="Fraser C.M."/>
        </authorList>
    </citation>
    <scope>NUCLEOTIDE SEQUENCE [LARGE SCALE GENOMIC DNA]</scope>
    <source>
        <strain>ATCC 43589 / DSM 3109 / JCM 10099 / NBRC 100826 / MSB8</strain>
    </source>
</reference>
<gene>
    <name evidence="1" type="primary">thi4</name>
    <name type="ordered locus">TM_0787</name>
</gene>